<keyword id="KW-1185">Reference proteome</keyword>
<keyword id="KW-0677">Repeat</keyword>
<keyword id="KW-0749">Sporulation</keyword>
<reference key="1">
    <citation type="journal article" date="1990" name="Biochemistry">
        <title>A shared internal threonine-glutamic acid-threonine-proline repeat defines a family of Dictyostelium discoideum spore germination specific proteins.</title>
        <authorList>
            <person name="Giorda R."/>
            <person name="Ohmachi T."/>
            <person name="Shaw D.R."/>
            <person name="Ennis H.L."/>
        </authorList>
    </citation>
    <scope>NUCLEOTIDE SEQUENCE [GENOMIC DNA]</scope>
</reference>
<reference key="2">
    <citation type="journal article" date="2005" name="Nature">
        <title>The genome of the social amoeba Dictyostelium discoideum.</title>
        <authorList>
            <person name="Eichinger L."/>
            <person name="Pachebat J.A."/>
            <person name="Gloeckner G."/>
            <person name="Rajandream M.A."/>
            <person name="Sucgang R."/>
            <person name="Berriman M."/>
            <person name="Song J."/>
            <person name="Olsen R."/>
            <person name="Szafranski K."/>
            <person name="Xu Q."/>
            <person name="Tunggal B."/>
            <person name="Kummerfeld S."/>
            <person name="Madera M."/>
            <person name="Konfortov B.A."/>
            <person name="Rivero F."/>
            <person name="Bankier A.T."/>
            <person name="Lehmann R."/>
            <person name="Hamlin N."/>
            <person name="Davies R."/>
            <person name="Gaudet P."/>
            <person name="Fey P."/>
            <person name="Pilcher K."/>
            <person name="Chen G."/>
            <person name="Saunders D."/>
            <person name="Sodergren E.J."/>
            <person name="Davis P."/>
            <person name="Kerhornou A."/>
            <person name="Nie X."/>
            <person name="Hall N."/>
            <person name="Anjard C."/>
            <person name="Hemphill L."/>
            <person name="Bason N."/>
            <person name="Farbrother P."/>
            <person name="Desany B."/>
            <person name="Just E."/>
            <person name="Morio T."/>
            <person name="Rost R."/>
            <person name="Churcher C.M."/>
            <person name="Cooper J."/>
            <person name="Haydock S."/>
            <person name="van Driessche N."/>
            <person name="Cronin A."/>
            <person name="Goodhead I."/>
            <person name="Muzny D.M."/>
            <person name="Mourier T."/>
            <person name="Pain A."/>
            <person name="Lu M."/>
            <person name="Harper D."/>
            <person name="Lindsay R."/>
            <person name="Hauser H."/>
            <person name="James K.D."/>
            <person name="Quiles M."/>
            <person name="Madan Babu M."/>
            <person name="Saito T."/>
            <person name="Buchrieser C."/>
            <person name="Wardroper A."/>
            <person name="Felder M."/>
            <person name="Thangavelu M."/>
            <person name="Johnson D."/>
            <person name="Knights A."/>
            <person name="Loulseged H."/>
            <person name="Mungall K.L."/>
            <person name="Oliver K."/>
            <person name="Price C."/>
            <person name="Quail M.A."/>
            <person name="Urushihara H."/>
            <person name="Hernandez J."/>
            <person name="Rabbinowitsch E."/>
            <person name="Steffen D."/>
            <person name="Sanders M."/>
            <person name="Ma J."/>
            <person name="Kohara Y."/>
            <person name="Sharp S."/>
            <person name="Simmonds M.N."/>
            <person name="Spiegler S."/>
            <person name="Tivey A."/>
            <person name="Sugano S."/>
            <person name="White B."/>
            <person name="Walker D."/>
            <person name="Woodward J.R."/>
            <person name="Winckler T."/>
            <person name="Tanaka Y."/>
            <person name="Shaulsky G."/>
            <person name="Schleicher M."/>
            <person name="Weinstock G.M."/>
            <person name="Rosenthal A."/>
            <person name="Cox E.C."/>
            <person name="Chisholm R.L."/>
            <person name="Gibbs R.A."/>
            <person name="Loomis W.F."/>
            <person name="Platzer M."/>
            <person name="Kay R.R."/>
            <person name="Williams J.G."/>
            <person name="Dear P.H."/>
            <person name="Noegel A.A."/>
            <person name="Barrell B.G."/>
            <person name="Kuspa A."/>
        </authorList>
    </citation>
    <scope>NUCLEOTIDE SEQUENCE [LARGE SCALE GENOMIC DNA]</scope>
    <source>
        <strain>AX4</strain>
    </source>
</reference>
<dbReference type="EMBL" id="M33862">
    <property type="protein sequence ID" value="AAA73632.1"/>
    <property type="molecule type" value="Genomic_DNA"/>
</dbReference>
<dbReference type="EMBL" id="AAFI02000005">
    <property type="protein sequence ID" value="EAL71905.1"/>
    <property type="molecule type" value="Genomic_DNA"/>
</dbReference>
<dbReference type="PIR" id="B35621">
    <property type="entry name" value="B35621"/>
</dbReference>
<dbReference type="RefSeq" id="XP_646125.1">
    <property type="nucleotide sequence ID" value="XM_641033.1"/>
</dbReference>
<dbReference type="SMR" id="P22698"/>
<dbReference type="FunCoup" id="P22698">
    <property type="interactions" value="377"/>
</dbReference>
<dbReference type="STRING" id="44689.P22698"/>
<dbReference type="CAZy" id="CBM49">
    <property type="family name" value="Carbohydrate-Binding Module Family 49"/>
</dbReference>
<dbReference type="GlyGen" id="P22698">
    <property type="glycosylation" value="7 sites"/>
</dbReference>
<dbReference type="PaxDb" id="44689-DDB0191122"/>
<dbReference type="EnsemblProtists" id="EAL71905">
    <property type="protein sequence ID" value="EAL71905"/>
    <property type="gene ID" value="DDB_G0269112"/>
</dbReference>
<dbReference type="GeneID" id="8617074"/>
<dbReference type="KEGG" id="ddi:DDB_G0269112"/>
<dbReference type="dictyBase" id="DDB_G0269112">
    <property type="gene designation" value="celB"/>
</dbReference>
<dbReference type="VEuPathDB" id="AmoebaDB:DDB_G0269112"/>
<dbReference type="eggNOG" id="ENOG502RDV2">
    <property type="taxonomic scope" value="Eukaryota"/>
</dbReference>
<dbReference type="HOGENOM" id="CLU_512346_0_0_1"/>
<dbReference type="InParanoid" id="P22698"/>
<dbReference type="OMA" id="GEVDHYI"/>
<dbReference type="PRO" id="PR:P22698"/>
<dbReference type="Proteomes" id="UP000002195">
    <property type="component" value="Chromosome 1"/>
</dbReference>
<dbReference type="GO" id="GO:0031012">
    <property type="term" value="C:extracellular matrix"/>
    <property type="evidence" value="ECO:0000318"/>
    <property type="project" value="GO_Central"/>
</dbReference>
<dbReference type="GO" id="GO:0030246">
    <property type="term" value="F:carbohydrate binding"/>
    <property type="evidence" value="ECO:0007669"/>
    <property type="project" value="InterPro"/>
</dbReference>
<dbReference type="GO" id="GO:0005201">
    <property type="term" value="F:extracellular matrix structural constituent"/>
    <property type="evidence" value="ECO:0000318"/>
    <property type="project" value="GO_Central"/>
</dbReference>
<dbReference type="GO" id="GO:0030198">
    <property type="term" value="P:extracellular matrix organization"/>
    <property type="evidence" value="ECO:0000318"/>
    <property type="project" value="GO_Central"/>
</dbReference>
<dbReference type="GO" id="GO:0009847">
    <property type="term" value="P:spore germination"/>
    <property type="evidence" value="ECO:0000270"/>
    <property type="project" value="dictyBase"/>
</dbReference>
<dbReference type="GO" id="GO:0030435">
    <property type="term" value="P:sporulation resulting in formation of a cellular spore"/>
    <property type="evidence" value="ECO:0007669"/>
    <property type="project" value="UniProtKB-KW"/>
</dbReference>
<dbReference type="Gene3D" id="2.60.40.420">
    <property type="entry name" value="Cupredoxins - blue copper proteins"/>
    <property type="match status" value="1"/>
</dbReference>
<dbReference type="InterPro" id="IPR008965">
    <property type="entry name" value="CBM2/CBM3_carb-bd_dom_sf"/>
</dbReference>
<dbReference type="InterPro" id="IPR019028">
    <property type="entry name" value="CBM_49"/>
</dbReference>
<dbReference type="InterPro" id="IPR008972">
    <property type="entry name" value="Cupredoxin"/>
</dbReference>
<dbReference type="InterPro" id="IPR052879">
    <property type="entry name" value="Dd_Spore_Germination_Stalk"/>
</dbReference>
<dbReference type="PANTHER" id="PTHR33239:SF19">
    <property type="entry name" value="CARBOHYDRATE BINDING DOMAIN-CONTAINING PROTEIN-RELATED"/>
    <property type="match status" value="1"/>
</dbReference>
<dbReference type="PANTHER" id="PTHR33239">
    <property type="entry name" value="CELLULOSE-BINDING DOMAIN-CONTAINING PROTEIN-RELATED"/>
    <property type="match status" value="1"/>
</dbReference>
<dbReference type="Pfam" id="PF09478">
    <property type="entry name" value="CBM49"/>
    <property type="match status" value="2"/>
</dbReference>
<dbReference type="SMART" id="SM01063">
    <property type="entry name" value="CBM49"/>
    <property type="match status" value="2"/>
</dbReference>
<dbReference type="SUPFAM" id="SSF49384">
    <property type="entry name" value="Carbohydrate-binding domain"/>
    <property type="match status" value="1"/>
</dbReference>
<dbReference type="SUPFAM" id="SSF49503">
    <property type="entry name" value="Cupredoxins"/>
    <property type="match status" value="1"/>
</dbReference>
<evidence type="ECO:0000256" key="1">
    <source>
        <dbReference type="SAM" id="MobiDB-lite"/>
    </source>
</evidence>
<accession>P22698</accession>
<accession>Q55DK6</accession>
<comment type="developmental stage">
    <text>Found predominantly during early stages of spore germination.</text>
</comment>
<comment type="domain">
    <text>A shared internal Thr-Glu-Thr-Pro repeat defines a family of D.discoideum spore germination specific proteins.</text>
</comment>
<sequence>MKNIYSLFLLFALISATFANNAFIVHWNSDSISKKLTGQIGDTISFYTSDGNSHDVKSSDGSVSSSVFSGSLTNPGIFKVTLTKEGNIEFTSSYDEGLSATIVVSSGGQIPITTTSSTTTDGSSTPSTPTSTTSASTTTSGGSATTTTGEPITDGSNGGASSTTGNSGTTGSATTTTSSSSDNSDGSVGTSTTTSPAITTSSGSIIDPTSPPTTDSSSNSGGYGSSSSIENGVECLLTITQDAFDSWTYDNIIYTVYQVNLTNIGTLSVESVILTPNDNSLIYHTWELVYDGTSLTLPTYRKAGPINPEETIIFGYISRNSTDVTFALSPTCSDSSSPTPTPTETPTETPTETPTETPTETPTETPTETPTETETPTPTPSSSSSDVDSGSSSEIETPTPTETDTPTPTPSSSSSEGSGSSSETQPPITPPPTTGTSCLAQVQQKVINSWINGEVDHYIQVEATIVNQGSTPISSFNFYSDAEQIWSVEKTGTNTYKLPSWFSTIPVGGSHTFGYIVKSAELSDLEGVQYTC</sequence>
<feature type="chain" id="PRO_0000072122" description="Spore germination protein 270-11">
    <location>
        <begin position="1"/>
        <end position="532"/>
    </location>
</feature>
<feature type="repeat" description="1-1">
    <location>
        <begin position="339"/>
        <end position="342"/>
    </location>
</feature>
<feature type="repeat" description="1-2">
    <location>
        <begin position="343"/>
        <end position="346"/>
    </location>
</feature>
<feature type="repeat" description="1-3">
    <location>
        <begin position="347"/>
        <end position="350"/>
    </location>
</feature>
<feature type="repeat" description="1-4">
    <location>
        <begin position="351"/>
        <end position="354"/>
    </location>
</feature>
<feature type="repeat" description="1-5">
    <location>
        <begin position="355"/>
        <end position="358"/>
    </location>
</feature>
<feature type="repeat" description="1-6">
    <location>
        <begin position="359"/>
        <end position="362"/>
    </location>
</feature>
<feature type="repeat" description="1-7">
    <location>
        <begin position="363"/>
        <end position="366"/>
    </location>
</feature>
<feature type="repeat" description="1-8">
    <location>
        <begin position="367"/>
        <end position="370"/>
    </location>
</feature>
<feature type="repeat" description="1-9">
    <location>
        <begin position="371"/>
        <end position="374"/>
    </location>
</feature>
<feature type="repeat" description="1-10">
    <location>
        <begin position="375"/>
        <end position="378"/>
    </location>
</feature>
<feature type="repeat" description="2-1">
    <location>
        <begin position="397"/>
        <end position="400"/>
    </location>
</feature>
<feature type="repeat" description="2-2">
    <location>
        <begin position="401"/>
        <end position="404"/>
    </location>
</feature>
<feature type="repeat" description="2-3">
    <location>
        <begin position="405"/>
        <end position="408"/>
    </location>
</feature>
<feature type="region of interest" description="Disordered" evidence="1">
    <location>
        <begin position="113"/>
        <end position="225"/>
    </location>
</feature>
<feature type="region of interest" description="Disordered" evidence="1">
    <location>
        <begin position="328"/>
        <end position="436"/>
    </location>
</feature>
<feature type="region of interest" description="10 X 4 AA tandem repeats of T-[EP]-T-[EP]">
    <location>
        <begin position="339"/>
        <end position="378"/>
    </location>
</feature>
<feature type="region of interest" description="3 X 4 AA tandem repeats of T-[EP]-T-[PD]">
    <location>
        <begin position="397"/>
        <end position="408"/>
    </location>
</feature>
<feature type="compositionally biased region" description="Low complexity" evidence="1">
    <location>
        <begin position="329"/>
        <end position="426"/>
    </location>
</feature>
<gene>
    <name type="primary">celB</name>
    <name type="synonym">gerE</name>
    <name type="ORF">DDB_G0269112</name>
</gene>
<protein>
    <recommendedName>
        <fullName>Spore germination protein 270-11</fullName>
    </recommendedName>
</protein>
<name>SPG7_DICDI</name>
<organism>
    <name type="scientific">Dictyostelium discoideum</name>
    <name type="common">Social amoeba</name>
    <dbReference type="NCBI Taxonomy" id="44689"/>
    <lineage>
        <taxon>Eukaryota</taxon>
        <taxon>Amoebozoa</taxon>
        <taxon>Evosea</taxon>
        <taxon>Eumycetozoa</taxon>
        <taxon>Dictyostelia</taxon>
        <taxon>Dictyosteliales</taxon>
        <taxon>Dictyosteliaceae</taxon>
        <taxon>Dictyostelium</taxon>
    </lineage>
</organism>
<proteinExistence type="evidence at transcript level"/>